<name>GGAG_MLVCB</name>
<dbReference type="EMBL" id="X57540">
    <property type="status" value="NOT_ANNOTATED_CDS"/>
    <property type="molecule type" value="Genomic_DNA"/>
</dbReference>
<dbReference type="SMR" id="P0DOH4"/>
<dbReference type="GO" id="GO:0020002">
    <property type="term" value="C:host cell plasma membrane"/>
    <property type="evidence" value="ECO:0007669"/>
    <property type="project" value="UniProtKB-SubCell"/>
</dbReference>
<dbReference type="GO" id="GO:0016020">
    <property type="term" value="C:membrane"/>
    <property type="evidence" value="ECO:0007669"/>
    <property type="project" value="UniProtKB-KW"/>
</dbReference>
<dbReference type="GO" id="GO:0003676">
    <property type="term" value="F:nucleic acid binding"/>
    <property type="evidence" value="ECO:0007669"/>
    <property type="project" value="InterPro"/>
</dbReference>
<dbReference type="GO" id="GO:0008270">
    <property type="term" value="F:zinc ion binding"/>
    <property type="evidence" value="ECO:0007669"/>
    <property type="project" value="InterPro"/>
</dbReference>
<dbReference type="GO" id="GO:0019068">
    <property type="term" value="P:virion assembly"/>
    <property type="evidence" value="ECO:0007669"/>
    <property type="project" value="InterPro"/>
</dbReference>
<dbReference type="FunFam" id="1.10.150.180:FF:000001">
    <property type="entry name" value="Gag polyprotein"/>
    <property type="match status" value="1"/>
</dbReference>
<dbReference type="Gene3D" id="1.10.150.180">
    <property type="entry name" value="Gamma-retroviral matrix domain"/>
    <property type="match status" value="1"/>
</dbReference>
<dbReference type="Gene3D" id="1.10.375.10">
    <property type="entry name" value="Human Immunodeficiency Virus Type 1 Capsid Protein"/>
    <property type="match status" value="1"/>
</dbReference>
<dbReference type="Gene3D" id="4.10.60.10">
    <property type="entry name" value="Zinc finger, CCHC-type"/>
    <property type="match status" value="1"/>
</dbReference>
<dbReference type="InterPro" id="IPR000840">
    <property type="entry name" value="G_retro_matrix"/>
</dbReference>
<dbReference type="InterPro" id="IPR036946">
    <property type="entry name" value="G_retro_matrix_sf"/>
</dbReference>
<dbReference type="InterPro" id="IPR002079">
    <property type="entry name" value="Gag_p12"/>
</dbReference>
<dbReference type="InterPro" id="IPR003036">
    <property type="entry name" value="Gag_P30"/>
</dbReference>
<dbReference type="InterPro" id="IPR008919">
    <property type="entry name" value="Retrov_capsid_N"/>
</dbReference>
<dbReference type="InterPro" id="IPR050462">
    <property type="entry name" value="Retroviral_Gag-Pol_poly"/>
</dbReference>
<dbReference type="InterPro" id="IPR010999">
    <property type="entry name" value="Retrovr_matrix"/>
</dbReference>
<dbReference type="InterPro" id="IPR001878">
    <property type="entry name" value="Znf_CCHC"/>
</dbReference>
<dbReference type="InterPro" id="IPR036875">
    <property type="entry name" value="Znf_CCHC_sf"/>
</dbReference>
<dbReference type="PANTHER" id="PTHR33166">
    <property type="entry name" value="GAG_P30 DOMAIN-CONTAINING PROTEIN"/>
    <property type="match status" value="1"/>
</dbReference>
<dbReference type="Pfam" id="PF01140">
    <property type="entry name" value="Gag_MA"/>
    <property type="match status" value="1"/>
</dbReference>
<dbReference type="Pfam" id="PF01141">
    <property type="entry name" value="Gag_p12"/>
    <property type="match status" value="1"/>
</dbReference>
<dbReference type="Pfam" id="PF02093">
    <property type="entry name" value="Gag_p30"/>
    <property type="match status" value="1"/>
</dbReference>
<dbReference type="Pfam" id="PF00098">
    <property type="entry name" value="zf-CCHC"/>
    <property type="match status" value="1"/>
</dbReference>
<dbReference type="SMART" id="SM00343">
    <property type="entry name" value="ZnF_C2HC"/>
    <property type="match status" value="1"/>
</dbReference>
<dbReference type="SUPFAM" id="SSF47836">
    <property type="entry name" value="Retroviral matrix proteins"/>
    <property type="match status" value="1"/>
</dbReference>
<dbReference type="SUPFAM" id="SSF47943">
    <property type="entry name" value="Retrovirus capsid protein, N-terminal core domain"/>
    <property type="match status" value="1"/>
</dbReference>
<dbReference type="SUPFAM" id="SSF57756">
    <property type="entry name" value="Retrovirus zinc finger-like domains"/>
    <property type="match status" value="1"/>
</dbReference>
<dbReference type="PROSITE" id="PS50158">
    <property type="entry name" value="ZF_CCHC"/>
    <property type="match status" value="1"/>
</dbReference>
<feature type="chain" id="PRO_0000441138" description="Glyco-Gag protein">
    <location>
        <begin position="1"/>
        <end position="624"/>
    </location>
</feature>
<feature type="topological domain" description="Cytoplasmic" evidence="5">
    <location>
        <begin position="1"/>
        <end position="63"/>
    </location>
</feature>
<feature type="transmembrane region" description="Helical" evidence="2">
    <location>
        <begin position="64"/>
        <end position="86"/>
    </location>
</feature>
<feature type="topological domain" description="Extracellular" evidence="5">
    <location>
        <begin position="87"/>
        <end position="624"/>
    </location>
</feature>
<feature type="region of interest" description="Disordered" evidence="4">
    <location>
        <begin position="200"/>
        <end position="284"/>
    </location>
</feature>
<feature type="region of interest" description="Disordered" evidence="4">
    <location>
        <begin position="290"/>
        <end position="309"/>
    </location>
</feature>
<feature type="region of interest" description="Disordered" evidence="4">
    <location>
        <begin position="520"/>
        <end position="624"/>
    </location>
</feature>
<feature type="compositionally biased region" description="Pro residues" evidence="4">
    <location>
        <begin position="200"/>
        <end position="209"/>
    </location>
</feature>
<feature type="compositionally biased region" description="Pro residues" evidence="4">
    <location>
        <begin position="247"/>
        <end position="258"/>
    </location>
</feature>
<feature type="compositionally biased region" description="Basic and acidic residues" evidence="4">
    <location>
        <begin position="520"/>
        <end position="552"/>
    </location>
</feature>
<feature type="compositionally biased region" description="Basic and acidic residues" evidence="4">
    <location>
        <begin position="572"/>
        <end position="605"/>
    </location>
</feature>
<feature type="glycosylation site" description="N-linked (GlcNAc...) asparagine; by host" evidence="3">
    <location>
        <position position="113"/>
    </location>
</feature>
<feature type="glycosylation site" description="N-linked (GlcNAc...) asparagine; by host" evidence="3">
    <location>
        <position position="478"/>
    </location>
</feature>
<keyword id="KW-0024">Alternative initiation</keyword>
<keyword id="KW-0325">Glycoprotein</keyword>
<keyword id="KW-1032">Host cell membrane</keyword>
<keyword id="KW-1043">Host membrane</keyword>
<keyword id="KW-0472">Membrane</keyword>
<keyword id="KW-0812">Transmembrane</keyword>
<keyword id="KW-1133">Transmembrane helix</keyword>
<accession>P0DOH4</accession>
<organismHost>
    <name type="scientific">Mus musculus</name>
    <name type="common">Mouse</name>
    <dbReference type="NCBI Taxonomy" id="10090"/>
</organismHost>
<evidence type="ECO:0000250" key="1">
    <source>
        <dbReference type="UniProtKB" id="P0DOG8"/>
    </source>
</evidence>
<evidence type="ECO:0000255" key="2"/>
<evidence type="ECO:0000255" key="3">
    <source>
        <dbReference type="PROSITE-ProRule" id="PRU00498"/>
    </source>
</evidence>
<evidence type="ECO:0000256" key="4">
    <source>
        <dbReference type="SAM" id="MobiDB-lite"/>
    </source>
</evidence>
<evidence type="ECO:0000305" key="5"/>
<sequence length="624" mass="70325">LGDVPGTSGAVFVARPESKSPDRFGLFGAPPLEEGYVILVGDENLKQFPPPSKFLPSVWNRSRAARLVCCSIVLCCLCLAVFLYWSENMGQTVTTPLSLTLDHWKDVERTAHNQSVDVKKRRWVTFCSVEWPTFNVGWPQDGTFNRDIITQVKIKVFSPGPHGHPDQVPYIVTWEALAFDPPPWVKPFVHPKPPLPPSAPSLLPEPPLSTSPRSSLYPALTPSLGAKPKPQVLPDSGGPLIDLLTEDPPPYRDPGPPPSDRDRDDGEAAPAGEAPDPSPMASRLRGRRELPVADSTTSQAFPLRSGGNGQLQYWPFSSSDLYNWKNNNPSFSEDPGKLTALIESVLLTHQPTWDDCQQLLGTLLTGEEKQRVLLEARKAVRGEDGRPTQLPNEINDAFPLERPDWDYNTQRGRNHLVLYRQLLLAGLQNAGRSPTNLAKVKGITQGPNESPSAFLERLKEAYRRYTPYDPEDPGQETNVSMSFIWQSAPDIGRKLERLEDLKSKTLGDLVREAEKIFNKRETPEEREERIKRETEEKEERRRAEDEQKEKERDRRRHREMSKLLATVVSGQKQDRQGGERRRPQLDKDQCAYCKEKGHWAKDCPKKPRGPRGPRPQTSLLALDD</sequence>
<protein>
    <recommendedName>
        <fullName>Glyco-Gag protein</fullName>
    </recommendedName>
    <alternativeName>
        <fullName>Gross cell surface antigen</fullName>
    </alternativeName>
    <alternativeName>
        <fullName>glycosylated Pr80 gag</fullName>
        <shortName>gPr80 Gag</shortName>
        <shortName>gag-gPr80</shortName>
    </alternativeName>
</protein>
<reference key="1">
    <citation type="journal article" date="1991" name="Nucleic Acids Res.">
        <title>Complete nucleotide sequence of the neurotropic murine retrovirus CAS-BR-E.</title>
        <authorList>
            <person name="Perryman S.M."/>
            <person name="McAtee F.J."/>
            <person name="Portis J.L."/>
        </authorList>
    </citation>
    <scope>NUCLEOTIDE SEQUENCE [GENOMIC DNA]</scope>
</reference>
<organism>
    <name type="scientific">Cas-Br-E murine leukemia virus</name>
    <dbReference type="NCBI Taxonomy" id="11792"/>
    <lineage>
        <taxon>Viruses</taxon>
        <taxon>Riboviria</taxon>
        <taxon>Pararnavirae</taxon>
        <taxon>Artverviricota</taxon>
        <taxon>Revtraviricetes</taxon>
        <taxon>Ortervirales</taxon>
        <taxon>Retroviridae</taxon>
        <taxon>Orthoretrovirinae</taxon>
        <taxon>Gammaretrovirus</taxon>
        <taxon>Murine leukemia virus</taxon>
    </lineage>
</organism>
<proteinExistence type="inferred from homology"/>
<comment type="function">
    <text evidence="1">Plays a role in viral particle release. Presumably acts by facilitating the fission of the virion bud at the cell surface. May prevent the antiviral activity of murine APOBEC3.</text>
</comment>
<comment type="subcellular location">
    <subcellularLocation>
        <location evidence="1 2">Host cell membrane</location>
        <topology evidence="1">Single-pass membrane protein</topology>
    </subcellularLocation>
</comment>
<comment type="alternative products">
    <event type="alternative initiation"/>
    <isoform>
        <id>P0DOH4-1</id>
        <name>Glyco-Gag protein</name>
        <sequence type="displayed"/>
    </isoform>
    <isoform>
        <id>P27460-1</id>
        <name>Gag polyprotein</name>
        <sequence type="external"/>
    </isoform>
</comment>
<comment type="PTM">
    <text evidence="1">Glycosylated by host.</text>
</comment>
<comment type="PTM">
    <text evidence="1">Cleaved by host near the middle of the molecule, releasing the c-terminal half containing capsid and nucleoprotein domains op GAG.</text>
</comment>